<comment type="catalytic activity">
    <reaction>
        <text>L-methionyl-[protein] + [thioredoxin]-disulfide + H2O = L-methionyl-(R)-S-oxide-[protein] + [thioredoxin]-dithiol</text>
        <dbReference type="Rhea" id="RHEA:24164"/>
        <dbReference type="Rhea" id="RHEA-COMP:10698"/>
        <dbReference type="Rhea" id="RHEA-COMP:10700"/>
        <dbReference type="Rhea" id="RHEA-COMP:12313"/>
        <dbReference type="Rhea" id="RHEA-COMP:12314"/>
        <dbReference type="ChEBI" id="CHEBI:15377"/>
        <dbReference type="ChEBI" id="CHEBI:16044"/>
        <dbReference type="ChEBI" id="CHEBI:29950"/>
        <dbReference type="ChEBI" id="CHEBI:45764"/>
        <dbReference type="ChEBI" id="CHEBI:50058"/>
        <dbReference type="EC" id="1.8.4.12"/>
    </reaction>
</comment>
<comment type="cofactor">
    <cofactor evidence="1">
        <name>Zn(2+)</name>
        <dbReference type="ChEBI" id="CHEBI:29105"/>
    </cofactor>
    <text evidence="1">Binds 1 zinc ion per subunit. The zinc ion is important for the structural integrity of the protein.</text>
</comment>
<comment type="similarity">
    <text evidence="3">Belongs to the MsrB Met sulfoxide reductase family.</text>
</comment>
<organism>
    <name type="scientific">Escherichia coli O157:H7</name>
    <dbReference type="NCBI Taxonomy" id="83334"/>
    <lineage>
        <taxon>Bacteria</taxon>
        <taxon>Pseudomonadati</taxon>
        <taxon>Pseudomonadota</taxon>
        <taxon>Gammaproteobacteria</taxon>
        <taxon>Enterobacterales</taxon>
        <taxon>Enterobacteriaceae</taxon>
        <taxon>Escherichia</taxon>
    </lineage>
</organism>
<sequence>MANKPSAEELKKNLSEMQFYVTQNHGTEPPFTGRLLHNKRDGVYHCLICDAPLFHSQTKYDSGCGWPSFYEPVSEESIRYIKDLSHGMQRIEIRCGNCDAHLGHVFPDGPQPTGERYCVNSASLRFTDGENGEEING</sequence>
<proteinExistence type="inferred from homology"/>
<feature type="initiator methionine" description="Removed" evidence="1">
    <location>
        <position position="1"/>
    </location>
</feature>
<feature type="chain" id="PRO_0000140272" description="Peptide methionine sulfoxide reductase MsrB">
    <location>
        <begin position="2"/>
        <end position="137"/>
    </location>
</feature>
<feature type="domain" description="MsrB" evidence="2">
    <location>
        <begin position="7"/>
        <end position="129"/>
    </location>
</feature>
<feature type="active site" description="Nucleophile" evidence="2">
    <location>
        <position position="118"/>
    </location>
</feature>
<feature type="binding site" evidence="2">
    <location>
        <position position="46"/>
    </location>
    <ligand>
        <name>Zn(2+)</name>
        <dbReference type="ChEBI" id="CHEBI:29105"/>
    </ligand>
</feature>
<feature type="binding site" evidence="2">
    <location>
        <position position="49"/>
    </location>
    <ligand>
        <name>Zn(2+)</name>
        <dbReference type="ChEBI" id="CHEBI:29105"/>
    </ligand>
</feature>
<feature type="binding site" evidence="2">
    <location>
        <position position="95"/>
    </location>
    <ligand>
        <name>Zn(2+)</name>
        <dbReference type="ChEBI" id="CHEBI:29105"/>
    </ligand>
</feature>
<feature type="binding site" evidence="2">
    <location>
        <position position="98"/>
    </location>
    <ligand>
        <name>Zn(2+)</name>
        <dbReference type="ChEBI" id="CHEBI:29105"/>
    </ligand>
</feature>
<keyword id="KW-0479">Metal-binding</keyword>
<keyword id="KW-0560">Oxidoreductase</keyword>
<keyword id="KW-1185">Reference proteome</keyword>
<keyword id="KW-0862">Zinc</keyword>
<protein>
    <recommendedName>
        <fullName>Peptide methionine sulfoxide reductase MsrB</fullName>
        <ecNumber>1.8.4.12</ecNumber>
    </recommendedName>
    <alternativeName>
        <fullName>Peptide-methionine (R)-S-oxide reductase</fullName>
    </alternativeName>
</protein>
<evidence type="ECO:0000250" key="1"/>
<evidence type="ECO:0000255" key="2">
    <source>
        <dbReference type="PROSITE-ProRule" id="PRU01126"/>
    </source>
</evidence>
<evidence type="ECO:0000305" key="3"/>
<name>MSRB_ECO57</name>
<reference key="1">
    <citation type="journal article" date="2001" name="Nature">
        <title>Genome sequence of enterohaemorrhagic Escherichia coli O157:H7.</title>
        <authorList>
            <person name="Perna N.T."/>
            <person name="Plunkett G. III"/>
            <person name="Burland V."/>
            <person name="Mau B."/>
            <person name="Glasner J.D."/>
            <person name="Rose D.J."/>
            <person name="Mayhew G.F."/>
            <person name="Evans P.S."/>
            <person name="Gregor J."/>
            <person name="Kirkpatrick H.A."/>
            <person name="Posfai G."/>
            <person name="Hackett J."/>
            <person name="Klink S."/>
            <person name="Boutin A."/>
            <person name="Shao Y."/>
            <person name="Miller L."/>
            <person name="Grotbeck E.J."/>
            <person name="Davis N.W."/>
            <person name="Lim A."/>
            <person name="Dimalanta E.T."/>
            <person name="Potamousis K."/>
            <person name="Apodaca J."/>
            <person name="Anantharaman T.S."/>
            <person name="Lin J."/>
            <person name="Yen G."/>
            <person name="Schwartz D.C."/>
            <person name="Welch R.A."/>
            <person name="Blattner F.R."/>
        </authorList>
    </citation>
    <scope>NUCLEOTIDE SEQUENCE [LARGE SCALE GENOMIC DNA]</scope>
    <source>
        <strain>O157:H7 / EDL933 / ATCC 700927 / EHEC</strain>
    </source>
</reference>
<reference key="2">
    <citation type="journal article" date="2001" name="DNA Res.">
        <title>Complete genome sequence of enterohemorrhagic Escherichia coli O157:H7 and genomic comparison with a laboratory strain K-12.</title>
        <authorList>
            <person name="Hayashi T."/>
            <person name="Makino K."/>
            <person name="Ohnishi M."/>
            <person name="Kurokawa K."/>
            <person name="Ishii K."/>
            <person name="Yokoyama K."/>
            <person name="Han C.-G."/>
            <person name="Ohtsubo E."/>
            <person name="Nakayama K."/>
            <person name="Murata T."/>
            <person name="Tanaka M."/>
            <person name="Tobe T."/>
            <person name="Iida T."/>
            <person name="Takami H."/>
            <person name="Honda T."/>
            <person name="Sasakawa C."/>
            <person name="Ogasawara N."/>
            <person name="Yasunaga T."/>
            <person name="Kuhara S."/>
            <person name="Shiba T."/>
            <person name="Hattori M."/>
            <person name="Shinagawa H."/>
        </authorList>
    </citation>
    <scope>NUCLEOTIDE SEQUENCE [LARGE SCALE GENOMIC DNA]</scope>
    <source>
        <strain>O157:H7 / Sakai / RIMD 0509952 / EHEC</strain>
    </source>
</reference>
<gene>
    <name type="primary">msrB</name>
    <name type="ordered locus">Z2817</name>
    <name type="ordered locus">ECs2487</name>
</gene>
<dbReference type="EC" id="1.8.4.12"/>
<dbReference type="EMBL" id="AE005174">
    <property type="protein sequence ID" value="AAG56767.1"/>
    <property type="molecule type" value="Genomic_DNA"/>
</dbReference>
<dbReference type="EMBL" id="BA000007">
    <property type="protein sequence ID" value="BAB35910.1"/>
    <property type="molecule type" value="Genomic_DNA"/>
</dbReference>
<dbReference type="PIR" id="C85788">
    <property type="entry name" value="C85788"/>
</dbReference>
<dbReference type="PIR" id="G90939">
    <property type="entry name" value="G90939"/>
</dbReference>
<dbReference type="RefSeq" id="NP_310514.1">
    <property type="nucleotide sequence ID" value="NC_002695.1"/>
</dbReference>
<dbReference type="RefSeq" id="WP_001284618.1">
    <property type="nucleotide sequence ID" value="NZ_VOAI01000010.1"/>
</dbReference>
<dbReference type="SMR" id="P0A748"/>
<dbReference type="STRING" id="155864.Z2817"/>
<dbReference type="GeneID" id="912866"/>
<dbReference type="GeneID" id="93775987"/>
<dbReference type="KEGG" id="ece:Z2817"/>
<dbReference type="KEGG" id="ecs:ECs_2487"/>
<dbReference type="PATRIC" id="fig|386585.9.peg.2604"/>
<dbReference type="eggNOG" id="COG0229">
    <property type="taxonomic scope" value="Bacteria"/>
</dbReference>
<dbReference type="HOGENOM" id="CLU_031040_8_5_6"/>
<dbReference type="OMA" id="YDETTDW"/>
<dbReference type="Proteomes" id="UP000000558">
    <property type="component" value="Chromosome"/>
</dbReference>
<dbReference type="Proteomes" id="UP000002519">
    <property type="component" value="Chromosome"/>
</dbReference>
<dbReference type="GO" id="GO:0005737">
    <property type="term" value="C:cytoplasm"/>
    <property type="evidence" value="ECO:0007669"/>
    <property type="project" value="TreeGrafter"/>
</dbReference>
<dbReference type="GO" id="GO:0033743">
    <property type="term" value="F:peptide-methionine (R)-S-oxide reductase activity"/>
    <property type="evidence" value="ECO:0007669"/>
    <property type="project" value="UniProtKB-UniRule"/>
</dbReference>
<dbReference type="GO" id="GO:0008270">
    <property type="term" value="F:zinc ion binding"/>
    <property type="evidence" value="ECO:0007669"/>
    <property type="project" value="UniProtKB-UniRule"/>
</dbReference>
<dbReference type="GO" id="GO:0030091">
    <property type="term" value="P:protein repair"/>
    <property type="evidence" value="ECO:0007669"/>
    <property type="project" value="InterPro"/>
</dbReference>
<dbReference type="GO" id="GO:0006979">
    <property type="term" value="P:response to oxidative stress"/>
    <property type="evidence" value="ECO:0007669"/>
    <property type="project" value="InterPro"/>
</dbReference>
<dbReference type="FunFam" id="2.170.150.20:FF:000001">
    <property type="entry name" value="Peptide methionine sulfoxide reductase MsrB"/>
    <property type="match status" value="1"/>
</dbReference>
<dbReference type="Gene3D" id="2.170.150.20">
    <property type="entry name" value="Peptide methionine sulfoxide reductase"/>
    <property type="match status" value="1"/>
</dbReference>
<dbReference type="HAMAP" id="MF_01400">
    <property type="entry name" value="MsrB"/>
    <property type="match status" value="1"/>
</dbReference>
<dbReference type="InterPro" id="IPR028427">
    <property type="entry name" value="Met_Sox_Rdtase_MsrB"/>
</dbReference>
<dbReference type="InterPro" id="IPR002579">
    <property type="entry name" value="Met_Sox_Rdtase_MsrB_dom"/>
</dbReference>
<dbReference type="InterPro" id="IPR011057">
    <property type="entry name" value="Mss4-like_sf"/>
</dbReference>
<dbReference type="NCBIfam" id="TIGR00357">
    <property type="entry name" value="peptide-methionine (R)-S-oxide reductase MsrB"/>
    <property type="match status" value="1"/>
</dbReference>
<dbReference type="PANTHER" id="PTHR10173">
    <property type="entry name" value="METHIONINE SULFOXIDE REDUCTASE"/>
    <property type="match status" value="1"/>
</dbReference>
<dbReference type="PANTHER" id="PTHR10173:SF52">
    <property type="entry name" value="METHIONINE-R-SULFOXIDE REDUCTASE B1"/>
    <property type="match status" value="1"/>
</dbReference>
<dbReference type="Pfam" id="PF01641">
    <property type="entry name" value="SelR"/>
    <property type="match status" value="1"/>
</dbReference>
<dbReference type="SUPFAM" id="SSF51316">
    <property type="entry name" value="Mss4-like"/>
    <property type="match status" value="1"/>
</dbReference>
<dbReference type="PROSITE" id="PS51790">
    <property type="entry name" value="MSRB"/>
    <property type="match status" value="1"/>
</dbReference>
<accession>P0A748</accession>
<accession>P39903</accession>
<accession>P76232</accession>
<accession>P76912</accession>